<protein>
    <recommendedName>
        <fullName evidence="1">Ribosomal RNA large subunit methyltransferase K/L</fullName>
    </recommendedName>
    <domain>
        <recommendedName>
            <fullName evidence="1">23S rRNA m2G2445 methyltransferase</fullName>
            <ecNumber evidence="1">2.1.1.173</ecNumber>
        </recommendedName>
        <alternativeName>
            <fullName evidence="1">rRNA (guanine-N(2)-)-methyltransferase RlmL</fullName>
        </alternativeName>
    </domain>
    <domain>
        <recommendedName>
            <fullName evidence="1">23S rRNA m7G2069 methyltransferase</fullName>
            <ecNumber evidence="1">2.1.1.264</ecNumber>
        </recommendedName>
        <alternativeName>
            <fullName evidence="1">rRNA (guanine-N(7)-)-methyltransferase RlmK</fullName>
        </alternativeName>
    </domain>
</protein>
<name>RLMKL_HAEIN</name>
<organism>
    <name type="scientific">Haemophilus influenzae (strain ATCC 51907 / DSM 11121 / KW20 / Rd)</name>
    <dbReference type="NCBI Taxonomy" id="71421"/>
    <lineage>
        <taxon>Bacteria</taxon>
        <taxon>Pseudomonadati</taxon>
        <taxon>Pseudomonadota</taxon>
        <taxon>Gammaproteobacteria</taxon>
        <taxon>Pasteurellales</taxon>
        <taxon>Pasteurellaceae</taxon>
        <taxon>Haemophilus</taxon>
    </lineage>
</organism>
<feature type="chain" id="PRO_0000140474" description="Ribosomal RNA large subunit methyltransferase K/L">
    <location>
        <begin position="1"/>
        <end position="711"/>
    </location>
</feature>
<feature type="domain" description="THUMP" evidence="1">
    <location>
        <begin position="43"/>
        <end position="154"/>
    </location>
</feature>
<proteinExistence type="inferred from homology"/>
<evidence type="ECO:0000255" key="1">
    <source>
        <dbReference type="HAMAP-Rule" id="MF_01858"/>
    </source>
</evidence>
<evidence type="ECO:0000305" key="2"/>
<keyword id="KW-0963">Cytoplasm</keyword>
<keyword id="KW-0489">Methyltransferase</keyword>
<keyword id="KW-1185">Reference proteome</keyword>
<keyword id="KW-0694">RNA-binding</keyword>
<keyword id="KW-0698">rRNA processing</keyword>
<keyword id="KW-0949">S-adenosyl-L-methionine</keyword>
<keyword id="KW-0808">Transferase</keyword>
<reference key="1">
    <citation type="journal article" date="1995" name="Science">
        <title>Whole-genome random sequencing and assembly of Haemophilus influenzae Rd.</title>
        <authorList>
            <person name="Fleischmann R.D."/>
            <person name="Adams M.D."/>
            <person name="White O."/>
            <person name="Clayton R.A."/>
            <person name="Kirkness E.F."/>
            <person name="Kerlavage A.R."/>
            <person name="Bult C.J."/>
            <person name="Tomb J.-F."/>
            <person name="Dougherty B.A."/>
            <person name="Merrick J.M."/>
            <person name="McKenney K."/>
            <person name="Sutton G.G."/>
            <person name="FitzHugh W."/>
            <person name="Fields C.A."/>
            <person name="Gocayne J.D."/>
            <person name="Scott J.D."/>
            <person name="Shirley R."/>
            <person name="Liu L.-I."/>
            <person name="Glodek A."/>
            <person name="Kelley J.M."/>
            <person name="Weidman J.F."/>
            <person name="Phillips C.A."/>
            <person name="Spriggs T."/>
            <person name="Hedblom E."/>
            <person name="Cotton M.D."/>
            <person name="Utterback T.R."/>
            <person name="Hanna M.C."/>
            <person name="Nguyen D.T."/>
            <person name="Saudek D.M."/>
            <person name="Brandon R.C."/>
            <person name="Fine L.D."/>
            <person name="Fritchman J.L."/>
            <person name="Fuhrmann J.L."/>
            <person name="Geoghagen N.S.M."/>
            <person name="Gnehm C.L."/>
            <person name="McDonald L.A."/>
            <person name="Small K.V."/>
            <person name="Fraser C.M."/>
            <person name="Smith H.O."/>
            <person name="Venter J.C."/>
        </authorList>
    </citation>
    <scope>NUCLEOTIDE SEQUENCE [LARGE SCALE GENOMIC DNA]</scope>
    <source>
        <strain>ATCC 51907 / DSM 11121 / KW20 / Rd</strain>
    </source>
</reference>
<dbReference type="EC" id="2.1.1.173" evidence="1"/>
<dbReference type="EC" id="2.1.1.264" evidence="1"/>
<dbReference type="EMBL" id="L42023">
    <property type="status" value="NOT_ANNOTATED_CDS"/>
    <property type="molecule type" value="Genomic_DNA"/>
</dbReference>
<dbReference type="SMR" id="P44524"/>
<dbReference type="PhylomeDB" id="P44524"/>
<dbReference type="Proteomes" id="UP000000579">
    <property type="component" value="Chromosome"/>
</dbReference>
<dbReference type="GO" id="GO:0005737">
    <property type="term" value="C:cytoplasm"/>
    <property type="evidence" value="ECO:0007669"/>
    <property type="project" value="UniProtKB-SubCell"/>
</dbReference>
<dbReference type="GO" id="GO:0052915">
    <property type="term" value="F:23S rRNA (guanine(2445)-N(2))-methyltransferase activity"/>
    <property type="evidence" value="ECO:0007669"/>
    <property type="project" value="UniProtKB-UniRule"/>
</dbReference>
<dbReference type="GO" id="GO:0003723">
    <property type="term" value="F:RNA binding"/>
    <property type="evidence" value="ECO:0007669"/>
    <property type="project" value="UniProtKB-KW"/>
</dbReference>
<dbReference type="GO" id="GO:0008990">
    <property type="term" value="F:rRNA (guanine-N2-)-methyltransferase activity"/>
    <property type="evidence" value="ECO:0000318"/>
    <property type="project" value="GO_Central"/>
</dbReference>
<dbReference type="GO" id="GO:0070043">
    <property type="term" value="F:rRNA (guanine-N7-)-methyltransferase activity"/>
    <property type="evidence" value="ECO:0000318"/>
    <property type="project" value="GO_Central"/>
</dbReference>
<dbReference type="CDD" id="cd02440">
    <property type="entry name" value="AdoMet_MTases"/>
    <property type="match status" value="2"/>
</dbReference>
<dbReference type="CDD" id="cd11715">
    <property type="entry name" value="THUMP_AdoMetMT"/>
    <property type="match status" value="1"/>
</dbReference>
<dbReference type="FunFam" id="3.30.750.80:FF:000001">
    <property type="entry name" value="Ribosomal RNA large subunit methyltransferase K/L"/>
    <property type="match status" value="1"/>
</dbReference>
<dbReference type="FunFam" id="3.40.50.150:FF:000039">
    <property type="entry name" value="Ribosomal RNA large subunit methyltransferase K/L"/>
    <property type="match status" value="1"/>
</dbReference>
<dbReference type="Gene3D" id="3.30.2130.30">
    <property type="match status" value="1"/>
</dbReference>
<dbReference type="Gene3D" id="3.30.750.80">
    <property type="entry name" value="RNA methyltransferase domain (HRMD) like"/>
    <property type="match status" value="1"/>
</dbReference>
<dbReference type="Gene3D" id="3.40.50.150">
    <property type="entry name" value="Vaccinia Virus protein VP39"/>
    <property type="match status" value="2"/>
</dbReference>
<dbReference type="HAMAP" id="MF_01858">
    <property type="entry name" value="23SrRNA_methyltr_KL"/>
    <property type="match status" value="1"/>
</dbReference>
<dbReference type="InterPro" id="IPR017244">
    <property type="entry name" value="23SrRNA_methyltr_KL"/>
</dbReference>
<dbReference type="InterPro" id="IPR002052">
    <property type="entry name" value="DNA_methylase_N6_adenine_CS"/>
</dbReference>
<dbReference type="InterPro" id="IPR000241">
    <property type="entry name" value="RlmKL-like_Mtase"/>
</dbReference>
<dbReference type="InterPro" id="IPR053943">
    <property type="entry name" value="RlmKL-like_Mtase_CS"/>
</dbReference>
<dbReference type="InterPro" id="IPR054170">
    <property type="entry name" value="RlmL_1st"/>
</dbReference>
<dbReference type="InterPro" id="IPR019614">
    <property type="entry name" value="SAM-dep_methyl-trfase"/>
</dbReference>
<dbReference type="InterPro" id="IPR029063">
    <property type="entry name" value="SAM-dependent_MTases_sf"/>
</dbReference>
<dbReference type="InterPro" id="IPR004114">
    <property type="entry name" value="THUMP_dom"/>
</dbReference>
<dbReference type="NCBIfam" id="NF008748">
    <property type="entry name" value="PRK11783.1"/>
    <property type="match status" value="1"/>
</dbReference>
<dbReference type="PANTHER" id="PTHR47313">
    <property type="entry name" value="RIBOSOMAL RNA LARGE SUBUNIT METHYLTRANSFERASE K/L"/>
    <property type="match status" value="1"/>
</dbReference>
<dbReference type="PANTHER" id="PTHR47313:SF1">
    <property type="entry name" value="RIBOSOMAL RNA LARGE SUBUNIT METHYLTRANSFERASE K_L"/>
    <property type="match status" value="1"/>
</dbReference>
<dbReference type="Pfam" id="PF10672">
    <property type="entry name" value="Methyltrans_SAM"/>
    <property type="match status" value="1"/>
</dbReference>
<dbReference type="Pfam" id="PF22020">
    <property type="entry name" value="RlmL_1st"/>
    <property type="match status" value="1"/>
</dbReference>
<dbReference type="Pfam" id="PF02926">
    <property type="entry name" value="THUMP"/>
    <property type="match status" value="1"/>
</dbReference>
<dbReference type="Pfam" id="PF01170">
    <property type="entry name" value="UPF0020"/>
    <property type="match status" value="1"/>
</dbReference>
<dbReference type="PIRSF" id="PIRSF037618">
    <property type="entry name" value="RNA_Mtase_bacteria_prd"/>
    <property type="match status" value="1"/>
</dbReference>
<dbReference type="SMART" id="SM00981">
    <property type="entry name" value="THUMP"/>
    <property type="match status" value="1"/>
</dbReference>
<dbReference type="SUPFAM" id="SSF53335">
    <property type="entry name" value="S-adenosyl-L-methionine-dependent methyltransferases"/>
    <property type="match status" value="2"/>
</dbReference>
<dbReference type="PROSITE" id="PS51165">
    <property type="entry name" value="THUMP"/>
    <property type="match status" value="1"/>
</dbReference>
<dbReference type="PROSITE" id="PS01261">
    <property type="entry name" value="UPF0020"/>
    <property type="match status" value="1"/>
</dbReference>
<accession>P44524</accession>
<accession>P43945</accession>
<gene>
    <name evidence="1" type="primary">rlmL</name>
    <name type="ordered locus">HI_0116</name>
</gene>
<sequence length="711" mass="81502">MKQLFATTSRGFEELLKVELTELGAQEAKVVQGGVHYQADDETLYRTLLWSRLASRILFPLIETKIYSDLDLYAAVSGFNWLAQFDERVTFFVDFNGTNQEIRHTQFGAMRVKDGIVDYFERQGKTRPDVDKIQPDVRIHAYLNRENLVISLDLSGEALHLRGYREDAGQAPLRETLAAAIVMRSGWQVGSPLVDPMCGSGTLLIEAAQMEAKIAPQLYRLHWGFDFWKAHNQSAWEKVKNEAIELAEEKQREIQPHFYGFDLDHRVLKKAQKNAQNAGVSHLIKWQQADVAALKNPRLNEVGTVICNPPYGERLGTTPALIALYSVFGQRLKKEFCGWNVSVFSSESTLLDCLRMRASRQFKAKNGPLDCVQKNYQVSERKSDAITDEKELEFNRTSEVAPDFANRLQKNIKKISKWAKQQELDAYRLYDADLPEYNLAVDRYADYIVVQEYAAPKNIDENKARQRLLDAVTATLQVTGVETNKLILKVRQKQKGTNQYEKLANKGEYFYVNEYGTQLWVNLTDYLDTGLFLDHRLTRKMIGELAKGKDFLNLFAYTGSATVHAALGGAKSTTTVDMSNTYLNWAEQNLILNDIEGKQHKLIQADCLQWLEKCDRQFDLIFADPPTFSNSKRMEESWDVQRDHVKLMRNLKRVLSNNGTIVFSNNKRGFKMNLVALEELGLSAIEISHKTLPLDFERNKQIHNCWMIQHI</sequence>
<comment type="function">
    <text evidence="1">Specifically methylates the guanine in position 2445 (m2G2445) and the guanine in position 2069 (m7G2069) of 23S rRNA.</text>
</comment>
<comment type="catalytic activity">
    <reaction evidence="1">
        <text>guanosine(2445) in 23S rRNA + S-adenosyl-L-methionine = N(2)-methylguanosine(2445) in 23S rRNA + S-adenosyl-L-homocysteine + H(+)</text>
        <dbReference type="Rhea" id="RHEA:42740"/>
        <dbReference type="Rhea" id="RHEA-COMP:10215"/>
        <dbReference type="Rhea" id="RHEA-COMP:10216"/>
        <dbReference type="ChEBI" id="CHEBI:15378"/>
        <dbReference type="ChEBI" id="CHEBI:57856"/>
        <dbReference type="ChEBI" id="CHEBI:59789"/>
        <dbReference type="ChEBI" id="CHEBI:74269"/>
        <dbReference type="ChEBI" id="CHEBI:74481"/>
        <dbReference type="EC" id="2.1.1.173"/>
    </reaction>
</comment>
<comment type="catalytic activity">
    <reaction evidence="1">
        <text>guanosine(2069) in 23S rRNA + S-adenosyl-L-methionine = N(2)-methylguanosine(2069) in 23S rRNA + S-adenosyl-L-homocysteine + H(+)</text>
        <dbReference type="Rhea" id="RHEA:43772"/>
        <dbReference type="Rhea" id="RHEA-COMP:10688"/>
        <dbReference type="Rhea" id="RHEA-COMP:10689"/>
        <dbReference type="ChEBI" id="CHEBI:15378"/>
        <dbReference type="ChEBI" id="CHEBI:57856"/>
        <dbReference type="ChEBI" id="CHEBI:59789"/>
        <dbReference type="ChEBI" id="CHEBI:74269"/>
        <dbReference type="ChEBI" id="CHEBI:74481"/>
        <dbReference type="EC" id="2.1.1.264"/>
    </reaction>
</comment>
<comment type="subcellular location">
    <subcellularLocation>
        <location evidence="1">Cytoplasm</location>
    </subcellularLocation>
</comment>
<comment type="similarity">
    <text evidence="1">Belongs to the methyltransferase superfamily. RlmKL family.</text>
</comment>
<comment type="sequence caution" evidence="2">
    <conflict type="frameshift">
        <sequence resource="EMBL" id="L42023"/>
    </conflict>
</comment>